<reference key="1">
    <citation type="journal article" date="2008" name="Genome Biol.">
        <title>The complete genome, comparative and functional analysis of Stenotrophomonas maltophilia reveals an organism heavily shielded by drug resistance determinants.</title>
        <authorList>
            <person name="Crossman L.C."/>
            <person name="Gould V.C."/>
            <person name="Dow J.M."/>
            <person name="Vernikos G.S."/>
            <person name="Okazaki A."/>
            <person name="Sebaihia M."/>
            <person name="Saunders D."/>
            <person name="Arrowsmith C."/>
            <person name="Carver T."/>
            <person name="Peters N."/>
            <person name="Adlem E."/>
            <person name="Kerhornou A."/>
            <person name="Lord A."/>
            <person name="Murphy L."/>
            <person name="Seeger K."/>
            <person name="Squares R."/>
            <person name="Rutter S."/>
            <person name="Quail M.A."/>
            <person name="Rajandream M.A."/>
            <person name="Harris D."/>
            <person name="Churcher C."/>
            <person name="Bentley S.D."/>
            <person name="Parkhill J."/>
            <person name="Thomson N.R."/>
            <person name="Avison M.B."/>
        </authorList>
    </citation>
    <scope>NUCLEOTIDE SEQUENCE [LARGE SCALE GENOMIC DNA]</scope>
    <source>
        <strain>K279a</strain>
    </source>
</reference>
<organism>
    <name type="scientific">Stenotrophomonas maltophilia (strain K279a)</name>
    <dbReference type="NCBI Taxonomy" id="522373"/>
    <lineage>
        <taxon>Bacteria</taxon>
        <taxon>Pseudomonadati</taxon>
        <taxon>Pseudomonadota</taxon>
        <taxon>Gammaproteobacteria</taxon>
        <taxon>Lysobacterales</taxon>
        <taxon>Lysobacteraceae</taxon>
        <taxon>Stenotrophomonas</taxon>
        <taxon>Stenotrophomonas maltophilia group</taxon>
    </lineage>
</organism>
<gene>
    <name evidence="1" type="primary">mntP</name>
    <name type="ordered locus">Smlt4626</name>
</gene>
<feature type="chain" id="PRO_1000200043" description="Putative manganese efflux pump MntP">
    <location>
        <begin position="1"/>
        <end position="191"/>
    </location>
</feature>
<feature type="transmembrane region" description="Helical" evidence="1">
    <location>
        <begin position="3"/>
        <end position="23"/>
    </location>
</feature>
<feature type="transmembrane region" description="Helical" evidence="1">
    <location>
        <begin position="37"/>
        <end position="57"/>
    </location>
</feature>
<feature type="transmembrane region" description="Helical" evidence="1">
    <location>
        <begin position="65"/>
        <end position="85"/>
    </location>
</feature>
<feature type="transmembrane region" description="Helical" evidence="1">
    <location>
        <begin position="107"/>
        <end position="129"/>
    </location>
</feature>
<feature type="transmembrane region" description="Helical" evidence="1">
    <location>
        <begin position="144"/>
        <end position="164"/>
    </location>
</feature>
<feature type="transmembrane region" description="Helical" evidence="1">
    <location>
        <begin position="169"/>
        <end position="189"/>
    </location>
</feature>
<accession>B2FNG8</accession>
<name>MNTP_STRMK</name>
<dbReference type="EMBL" id="AM743169">
    <property type="protein sequence ID" value="CAQ47979.1"/>
    <property type="molecule type" value="Genomic_DNA"/>
</dbReference>
<dbReference type="RefSeq" id="WP_012481640.1">
    <property type="nucleotide sequence ID" value="NC_010943.1"/>
</dbReference>
<dbReference type="EnsemblBacteria" id="CAQ47979">
    <property type="protein sequence ID" value="CAQ47979"/>
    <property type="gene ID" value="Smlt4626"/>
</dbReference>
<dbReference type="KEGG" id="sml:Smlt4626"/>
<dbReference type="PATRIC" id="fig|522373.3.peg.4360"/>
<dbReference type="eggNOG" id="COG1971">
    <property type="taxonomic scope" value="Bacteria"/>
</dbReference>
<dbReference type="HOGENOM" id="CLU_096410_0_0_6"/>
<dbReference type="Proteomes" id="UP000008840">
    <property type="component" value="Chromosome"/>
</dbReference>
<dbReference type="GO" id="GO:0005886">
    <property type="term" value="C:plasma membrane"/>
    <property type="evidence" value="ECO:0007669"/>
    <property type="project" value="UniProtKB-SubCell"/>
</dbReference>
<dbReference type="GO" id="GO:0005384">
    <property type="term" value="F:manganese ion transmembrane transporter activity"/>
    <property type="evidence" value="ECO:0007669"/>
    <property type="project" value="UniProtKB-UniRule"/>
</dbReference>
<dbReference type="HAMAP" id="MF_01521">
    <property type="entry name" value="MntP_pump"/>
    <property type="match status" value="1"/>
</dbReference>
<dbReference type="InterPro" id="IPR003810">
    <property type="entry name" value="Mntp/YtaF"/>
</dbReference>
<dbReference type="InterPro" id="IPR022929">
    <property type="entry name" value="Put_MntP"/>
</dbReference>
<dbReference type="PANTHER" id="PTHR35529">
    <property type="entry name" value="MANGANESE EFFLUX PUMP MNTP-RELATED"/>
    <property type="match status" value="1"/>
</dbReference>
<dbReference type="PANTHER" id="PTHR35529:SF1">
    <property type="entry name" value="MANGANESE EFFLUX PUMP MNTP-RELATED"/>
    <property type="match status" value="1"/>
</dbReference>
<dbReference type="Pfam" id="PF02659">
    <property type="entry name" value="Mntp"/>
    <property type="match status" value="1"/>
</dbReference>
<protein>
    <recommendedName>
        <fullName evidence="1">Putative manganese efflux pump MntP</fullName>
    </recommendedName>
</protein>
<keyword id="KW-0997">Cell inner membrane</keyword>
<keyword id="KW-1003">Cell membrane</keyword>
<keyword id="KW-0406">Ion transport</keyword>
<keyword id="KW-0464">Manganese</keyword>
<keyword id="KW-0472">Membrane</keyword>
<keyword id="KW-1185">Reference proteome</keyword>
<keyword id="KW-0812">Transmembrane</keyword>
<keyword id="KW-1133">Transmembrane helix</keyword>
<keyword id="KW-0813">Transport</keyword>
<evidence type="ECO:0000255" key="1">
    <source>
        <dbReference type="HAMAP-Rule" id="MF_01521"/>
    </source>
</evidence>
<comment type="function">
    <text evidence="1">Probably functions as a manganese efflux pump.</text>
</comment>
<comment type="subcellular location">
    <subcellularLocation>
        <location evidence="1">Cell inner membrane</location>
        <topology evidence="1">Multi-pass membrane protein</topology>
    </subcellularLocation>
</comment>
<comment type="similarity">
    <text evidence="1">Belongs to the MntP (TC 9.B.29) family.</text>
</comment>
<proteinExistence type="inferred from homology"/>
<sequence length="191" mass="20132">MSPISILLIGFAMSTDAFAAAIGKGAAMRRPVFRDALRAGIIFGVIEAITPIIGWLLGRAALQYVEAFDHWIAFGLLGALGIHMIYNGLRPDSAEEDEDPSQHHGFWKLALTGFATSIDAMAVGIGLAFMDVHIGVMAAVIGLCTLTMVTAGIMFGRVLGSMVGKRAEIIGGVILVIIGATILYEHLHGVG</sequence>